<proteinExistence type="evidence at protein level"/>
<feature type="signal peptide" evidence="2">
    <location>
        <begin position="1"/>
        <end position="22"/>
    </location>
</feature>
<feature type="propeptide" id="PRO_0000400741" evidence="3 4">
    <location>
        <begin position="23"/>
        <end position="48"/>
    </location>
</feature>
<feature type="peptide" id="PRO_0000400742" description="U4-theraphotoxin-Hhn1a">
    <location>
        <begin position="49"/>
        <end position="85"/>
    </location>
</feature>
<feature type="disulfide bond" evidence="1">
    <location>
        <begin position="52"/>
        <end position="66"/>
    </location>
</feature>
<feature type="disulfide bond" evidence="1">
    <location>
        <begin position="56"/>
        <end position="77"/>
    </location>
</feature>
<feature type="disulfide bond" evidence="1">
    <location>
        <begin position="71"/>
        <end position="82"/>
    </location>
</feature>
<reference key="1">
    <citation type="journal article" date="2010" name="J. Proteome Res.">
        <title>Molecular diversification of peptide toxins from the tarantula Haplopelma hainanum (Ornithoctonus hainana) venom based on transcriptomic, peptidomic, and genomic analyses.</title>
        <authorList>
            <person name="Tang X."/>
            <person name="Zhang Y."/>
            <person name="Hu W."/>
            <person name="Xu D."/>
            <person name="Tao H."/>
            <person name="Yang X."/>
            <person name="Li Y."/>
            <person name="Jiang L."/>
            <person name="Liang S."/>
        </authorList>
    </citation>
    <scope>NUCLEOTIDE SEQUENCE [LARGE SCALE MRNA]</scope>
    <scope>PROTEIN SEQUENCE OF 49-85</scope>
    <scope>IDENTIFICATION BY MASS SPECTROMETRY</scope>
    <source>
        <tissue>Venom</tissue>
        <tissue>Venom gland</tissue>
    </source>
</reference>
<reference key="2">
    <citation type="journal article" date="2010" name="Dong Wu Xue Yan Jiu">
        <title>Isolation and characterization of Hainantoxin-II, a new neurotoxic peptide from the Chinese bird spider (Haplopelma hainanum).</title>
        <authorList>
            <person name="Pan J.Y."/>
            <person name="Yu Z.Q."/>
        </authorList>
    </citation>
    <scope>PROTEIN SEQUENCE OF 49-85</scope>
    <scope>FUNCTION</scope>
    <scope>MASS SPECTROMETRY</scope>
    <scope>TOXIC DOSE</scope>
    <source>
        <tissue>Venom</tissue>
    </source>
</reference>
<comment type="function">
    <text evidence="4">Neurotoxin active on both insects and mammals.</text>
</comment>
<comment type="subunit">
    <text>Monomer.</text>
</comment>
<comment type="subcellular location">
    <subcellularLocation>
        <location>Secreted</location>
    </subcellularLocation>
</comment>
<comment type="tissue specificity">
    <text>Expressed by the venom gland.</text>
</comment>
<comment type="mass spectrometry"/>
<comment type="toxic dose">
    <text evidence="4">LD(50) is 1.41 mg/kg by intracerebroventricular injection into mice.</text>
</comment>
<comment type="toxic dose">
    <text evidence="4">PD(50) is 16 mg/kg in cockroaches.</text>
</comment>
<comment type="similarity">
    <text evidence="5">Belongs to the neurotoxin 12 (Hwtx-2) family. 02 (Hwtx-2) subfamily.</text>
</comment>
<sequence>MKVTLIAILTCAAVLVLHTTAEEELEAESQLMEVGMPDTELAAVDEERLFECSVSCEIEKEGNKDCKKKKCKGGWKCKFNMCVKV</sequence>
<dbReference type="EMBL" id="GU293012">
    <property type="protein sequence ID" value="ADB56828.1"/>
    <property type="molecule type" value="mRNA"/>
</dbReference>
<dbReference type="SMR" id="D2Y2D5"/>
<dbReference type="ArachnoServer" id="AS001783">
    <property type="toxin name" value="U4-theraphotoxin-Hhn1a"/>
</dbReference>
<dbReference type="GO" id="GO:0005576">
    <property type="term" value="C:extracellular region"/>
    <property type="evidence" value="ECO:0007669"/>
    <property type="project" value="UniProtKB-SubCell"/>
</dbReference>
<dbReference type="GO" id="GO:0035792">
    <property type="term" value="C:host cell postsynaptic membrane"/>
    <property type="evidence" value="ECO:0007669"/>
    <property type="project" value="UniProtKB-KW"/>
</dbReference>
<dbReference type="GO" id="GO:0090729">
    <property type="term" value="F:toxin activity"/>
    <property type="evidence" value="ECO:0007669"/>
    <property type="project" value="UniProtKB-KW"/>
</dbReference>
<dbReference type="InterPro" id="IPR012625">
    <property type="entry name" value="Hwtx-2-like"/>
</dbReference>
<dbReference type="Pfam" id="PF08089">
    <property type="entry name" value="Toxin_20"/>
    <property type="match status" value="1"/>
</dbReference>
<dbReference type="SUPFAM" id="SSF57059">
    <property type="entry name" value="omega toxin-like"/>
    <property type="match status" value="1"/>
</dbReference>
<dbReference type="PROSITE" id="PS60022">
    <property type="entry name" value="HWTX_2"/>
    <property type="match status" value="1"/>
</dbReference>
<protein>
    <recommendedName>
        <fullName>U4-theraphotoxin-Hhn1a</fullName>
        <shortName>U4-TRTX-Hhn1a</shortName>
    </recommendedName>
    <alternativeName>
        <fullName>Hainantoxin-II.13</fullName>
        <shortName>HNTX-II.13</shortName>
    </alternativeName>
    <alternativeName>
        <fullName>Peptide F8-20.15</fullName>
    </alternativeName>
</protein>
<name>H2A13_CYRHA</name>
<keyword id="KW-0903">Direct protein sequencing</keyword>
<keyword id="KW-1015">Disulfide bond</keyword>
<keyword id="KW-0528">Neurotoxin</keyword>
<keyword id="KW-0629">Postsynaptic neurotoxin</keyword>
<keyword id="KW-0964">Secreted</keyword>
<keyword id="KW-0732">Signal</keyword>
<keyword id="KW-0800">Toxin</keyword>
<organism>
    <name type="scientific">Cyriopagopus hainanus</name>
    <name type="common">Chinese bird spider</name>
    <name type="synonym">Haplopelma hainanum</name>
    <dbReference type="NCBI Taxonomy" id="209901"/>
    <lineage>
        <taxon>Eukaryota</taxon>
        <taxon>Metazoa</taxon>
        <taxon>Ecdysozoa</taxon>
        <taxon>Arthropoda</taxon>
        <taxon>Chelicerata</taxon>
        <taxon>Arachnida</taxon>
        <taxon>Araneae</taxon>
        <taxon>Mygalomorphae</taxon>
        <taxon>Theraphosidae</taxon>
        <taxon>Haplopelma</taxon>
    </lineage>
</organism>
<evidence type="ECO:0000250" key="1"/>
<evidence type="ECO:0000255" key="2"/>
<evidence type="ECO:0000269" key="3">
    <source>
    </source>
</evidence>
<evidence type="ECO:0000269" key="4">
    <source>
    </source>
</evidence>
<evidence type="ECO:0000305" key="5"/>
<accession>D2Y2D5</accession>